<sequence>MANEHKSPLDKRVTDLFKDIPTDISTHLITGETFSNESFQAIPVYTLTNVTVKQAVHLSYKLFESMKTTKCAAGYQYAIYLLAQRLLTPAAGSNDLVFKDYIPQGGSDLPQEIKNKIYVTTELSDSQTAGKSEAEKKKATADLIFGDNTDHDLQQVRSQDDETIIRFGSFISAFLMKLIVKQQSNIVDGWNGMLERYTNFYGESPITAVPKPNADWLAGLKNYLISDPKIGHTWVRVISAAENALSVGDKSFQMVRYLASLPLSLTGMHAYKLFLEVQKQSNLGMQWLLEEMVSPKTLPALEGIAKILKNFESRTSTRKPPYFRYARIMSPAYFQELQTKNCPELVYLLVCLLQKYEAFGAGQEPTKIVGIERVPANIRAEMSRAAGYIFSVAPQRNMGMYSDSMRKALVHQEKASTSRAGKEKADEVFGM</sequence>
<reference key="1">
    <citation type="journal article" date="2000" name="Arch. Virol.">
        <title>Complete nucleotide sequence of Northern cereal mosaic virus and its genome organization.</title>
        <authorList>
            <person name="Tanno F."/>
            <person name="Nakatsu A."/>
            <person name="Toriyama S."/>
            <person name="Kojima M."/>
        </authorList>
    </citation>
    <scope>NUCLEOTIDE SEQUENCE [GENOMIC RNA]</scope>
</reference>
<name>NCAP_NCMV</name>
<proteinExistence type="inferred from homology"/>
<organism>
    <name type="scientific">Northern cereal mosaic virus</name>
    <name type="common">NCMV</name>
    <dbReference type="NCBI Taxonomy" id="1985704"/>
    <lineage>
        <taxon>Viruses</taxon>
        <taxon>Riboviria</taxon>
        <taxon>Orthornavirae</taxon>
        <taxon>Negarnaviricota</taxon>
        <taxon>Haploviricotina</taxon>
        <taxon>Monjiviricetes</taxon>
        <taxon>Mononegavirales</taxon>
        <taxon>Rhabdoviridae</taxon>
        <taxon>Betarhabdovirinae</taxon>
        <taxon>Cytorhabdovirus</taxon>
    </lineage>
</organism>
<organismHost>
    <name type="scientific">Hordeum vulgare</name>
    <name type="common">Barley</name>
    <dbReference type="NCBI Taxonomy" id="4513"/>
</organismHost>
<gene>
    <name type="primary">N</name>
</gene>
<dbReference type="EMBL" id="AB030277">
    <property type="protein sequence ID" value="BAA95344.1"/>
    <property type="molecule type" value="Genomic_RNA"/>
</dbReference>
<dbReference type="RefSeq" id="NP_057954.1">
    <property type="nucleotide sequence ID" value="NC_002251.1"/>
</dbReference>
<dbReference type="GeneID" id="1457724"/>
<dbReference type="KEGG" id="vg:1457724"/>
<dbReference type="OrthoDB" id="14639at10239"/>
<dbReference type="Proteomes" id="UP000007785">
    <property type="component" value="Genome"/>
</dbReference>
<dbReference type="GO" id="GO:0019029">
    <property type="term" value="C:helical viral capsid"/>
    <property type="evidence" value="ECO:0007669"/>
    <property type="project" value="UniProtKB-KW"/>
</dbReference>
<dbReference type="GO" id="GO:0030430">
    <property type="term" value="C:host cell cytoplasm"/>
    <property type="evidence" value="ECO:0007669"/>
    <property type="project" value="UniProtKB-SubCell"/>
</dbReference>
<dbReference type="GO" id="GO:1990904">
    <property type="term" value="C:ribonucleoprotein complex"/>
    <property type="evidence" value="ECO:0007669"/>
    <property type="project" value="UniProtKB-KW"/>
</dbReference>
<dbReference type="GO" id="GO:0019013">
    <property type="term" value="C:viral nucleocapsid"/>
    <property type="evidence" value="ECO:0007669"/>
    <property type="project" value="UniProtKB-KW"/>
</dbReference>
<dbReference type="GO" id="GO:0003723">
    <property type="term" value="F:RNA binding"/>
    <property type="evidence" value="ECO:0007669"/>
    <property type="project" value="UniProtKB-KW"/>
</dbReference>
<dbReference type="InterPro" id="IPR004902">
    <property type="entry name" value="Rhabdo_ncap_2"/>
</dbReference>
<dbReference type="Pfam" id="PF03216">
    <property type="entry name" value="Rhabdo_ncap_2"/>
    <property type="match status" value="1"/>
</dbReference>
<comment type="function">
    <text evidence="1">Encapsidates the genome, protecting it from nucleases. If expressed without protein P it binds non-specifically RNA and therefore can bind it's own mRNA. Interaction with protein P abolishes any non-specific RNA binding, and prevents phosphorylation. The soluble N-P complex encapsidates specifically the genomic RNA, with protein N protecting the genome like a pearl necklace. The encapsidated genomic RNA is termed the nucleocapsid (NC) and serves as template for viral transcription and replication. Protein N binds protein P in the NC through a different interaction, and can be phosphorylated. Subsequent viral replication is dependent on intracellular concentration of newly synthesized protein N. During replication, encapsidation by protein N is coupled to RNA synthesis and all replicative products are resistant to nucleases (By similarity).</text>
</comment>
<comment type="subunit">
    <text evidence="1">Homomultimerizes to form the nucleocapsid. Binds to viral genomic RNA (By similarity).</text>
</comment>
<comment type="subcellular location">
    <subcellularLocation>
        <location>Virion</location>
    </subcellularLocation>
    <subcellularLocation>
        <location evidence="1">Host cytoplasm</location>
    </subcellularLocation>
</comment>
<comment type="similarity">
    <text evidence="3">Belongs to the cytorhabdovirus nucleocapsid protein family.</text>
</comment>
<keyword id="KW-0167">Capsid protein</keyword>
<keyword id="KW-1139">Helical capsid protein</keyword>
<keyword id="KW-1035">Host cytoplasm</keyword>
<keyword id="KW-0597">Phosphoprotein</keyword>
<keyword id="KW-1185">Reference proteome</keyword>
<keyword id="KW-0687">Ribonucleoprotein</keyword>
<keyword id="KW-0694">RNA-binding</keyword>
<keyword id="KW-0543">Viral nucleoprotein</keyword>
<keyword id="KW-0946">Virion</keyword>
<evidence type="ECO:0000250" key="1"/>
<evidence type="ECO:0000256" key="2">
    <source>
        <dbReference type="SAM" id="MobiDB-lite"/>
    </source>
</evidence>
<evidence type="ECO:0000305" key="3"/>
<accession>Q9JGU1</accession>
<feature type="chain" id="PRO_0000297613" description="Nucleoprotein">
    <location>
        <begin position="1"/>
        <end position="431"/>
    </location>
</feature>
<feature type="region of interest" description="Disordered" evidence="2">
    <location>
        <begin position="412"/>
        <end position="431"/>
    </location>
</feature>
<protein>
    <recommendedName>
        <fullName>Nucleoprotein</fullName>
        <shortName>NP</shortName>
    </recommendedName>
    <alternativeName>
        <fullName>Nucleocapsid protein</fullName>
        <shortName>Protein N</shortName>
    </alternativeName>
</protein>